<feature type="chain" id="PRO_0000106954" description="Uncharacterized protein MJ0606">
    <location>
        <begin position="1"/>
        <end position="91"/>
    </location>
</feature>
<feature type="transmembrane region" description="Helical" evidence="1">
    <location>
        <begin position="9"/>
        <end position="29"/>
    </location>
</feature>
<feature type="transmembrane region" description="Helical" evidence="1">
    <location>
        <begin position="30"/>
        <end position="50"/>
    </location>
</feature>
<feature type="transmembrane region" description="Helical" evidence="1">
    <location>
        <begin position="67"/>
        <end position="87"/>
    </location>
</feature>
<evidence type="ECO:0000255" key="1"/>
<evidence type="ECO:0000305" key="2"/>
<protein>
    <recommendedName>
        <fullName>Uncharacterized protein MJ0606</fullName>
    </recommendedName>
</protein>
<gene>
    <name type="ordered locus">MJ0606</name>
</gene>
<dbReference type="EMBL" id="L77117">
    <property type="protein sequence ID" value="AAB98600.1"/>
    <property type="molecule type" value="Genomic_DNA"/>
</dbReference>
<dbReference type="PIR" id="F64375">
    <property type="entry name" value="F64375"/>
</dbReference>
<dbReference type="RefSeq" id="WP_010870110.1">
    <property type="nucleotide sequence ID" value="NC_000909.1"/>
</dbReference>
<dbReference type="FunCoup" id="Q58023">
    <property type="interactions" value="4"/>
</dbReference>
<dbReference type="STRING" id="243232.MJ_0606"/>
<dbReference type="PaxDb" id="243232-MJ_0606"/>
<dbReference type="EnsemblBacteria" id="AAB98600">
    <property type="protein sequence ID" value="AAB98600"/>
    <property type="gene ID" value="MJ_0606"/>
</dbReference>
<dbReference type="GeneID" id="1451471"/>
<dbReference type="KEGG" id="mja:MJ_0606"/>
<dbReference type="eggNOG" id="arCOG05042">
    <property type="taxonomic scope" value="Archaea"/>
</dbReference>
<dbReference type="HOGENOM" id="CLU_183480_0_0_2"/>
<dbReference type="InParanoid" id="Q58023"/>
<dbReference type="OrthoDB" id="64172at2157"/>
<dbReference type="Proteomes" id="UP000000805">
    <property type="component" value="Chromosome"/>
</dbReference>
<dbReference type="GO" id="GO:0005886">
    <property type="term" value="C:plasma membrane"/>
    <property type="evidence" value="ECO:0007669"/>
    <property type="project" value="UniProtKB-SubCell"/>
</dbReference>
<dbReference type="InterPro" id="IPR043941">
    <property type="entry name" value="EMC6-arch"/>
</dbReference>
<dbReference type="Pfam" id="PF19094">
    <property type="entry name" value="EMC6_arch"/>
    <property type="match status" value="1"/>
</dbReference>
<comment type="subcellular location">
    <subcellularLocation>
        <location evidence="2">Cell membrane</location>
        <topology evidence="2">Multi-pass membrane protein</topology>
    </subcellularLocation>
</comment>
<reference key="1">
    <citation type="journal article" date="1996" name="Science">
        <title>Complete genome sequence of the methanogenic archaeon, Methanococcus jannaschii.</title>
        <authorList>
            <person name="Bult C.J."/>
            <person name="White O."/>
            <person name="Olsen G.J."/>
            <person name="Zhou L."/>
            <person name="Fleischmann R.D."/>
            <person name="Sutton G.G."/>
            <person name="Blake J.A."/>
            <person name="FitzGerald L.M."/>
            <person name="Clayton R.A."/>
            <person name="Gocayne J.D."/>
            <person name="Kerlavage A.R."/>
            <person name="Dougherty B.A."/>
            <person name="Tomb J.-F."/>
            <person name="Adams M.D."/>
            <person name="Reich C.I."/>
            <person name="Overbeek R."/>
            <person name="Kirkness E.F."/>
            <person name="Weinstock K.G."/>
            <person name="Merrick J.M."/>
            <person name="Glodek A."/>
            <person name="Scott J.L."/>
            <person name="Geoghagen N.S.M."/>
            <person name="Weidman J.F."/>
            <person name="Fuhrmann J.L."/>
            <person name="Nguyen D."/>
            <person name="Utterback T.R."/>
            <person name="Kelley J.M."/>
            <person name="Peterson J.D."/>
            <person name="Sadow P.W."/>
            <person name="Hanna M.C."/>
            <person name="Cotton M.D."/>
            <person name="Roberts K.M."/>
            <person name="Hurst M.A."/>
            <person name="Kaine B.P."/>
            <person name="Borodovsky M."/>
            <person name="Klenk H.-P."/>
            <person name="Fraser C.M."/>
            <person name="Smith H.O."/>
            <person name="Woese C.R."/>
            <person name="Venter J.C."/>
        </authorList>
    </citation>
    <scope>NUCLEOTIDE SEQUENCE [LARGE SCALE GENOMIC DNA]</scope>
    <source>
        <strain>ATCC 43067 / DSM 2661 / JAL-1 / JCM 10045 / NBRC 100440</strain>
    </source>
</reference>
<proteinExistence type="predicted"/>
<name>Y606_METJA</name>
<keyword id="KW-1003">Cell membrane</keyword>
<keyword id="KW-0472">Membrane</keyword>
<keyword id="KW-1185">Reference proteome</keyword>
<keyword id="KW-0812">Transmembrane</keyword>
<keyword id="KW-1133">Transmembrane helix</keyword>
<accession>Q58023</accession>
<organism>
    <name type="scientific">Methanocaldococcus jannaschii (strain ATCC 43067 / DSM 2661 / JAL-1 / JCM 10045 / NBRC 100440)</name>
    <name type="common">Methanococcus jannaschii</name>
    <dbReference type="NCBI Taxonomy" id="243232"/>
    <lineage>
        <taxon>Archaea</taxon>
        <taxon>Methanobacteriati</taxon>
        <taxon>Methanobacteriota</taxon>
        <taxon>Methanomada group</taxon>
        <taxon>Methanococci</taxon>
        <taxon>Methanococcales</taxon>
        <taxon>Methanocaldococcaceae</taxon>
        <taxon>Methanocaldococcus</taxon>
    </lineage>
</organism>
<sequence length="91" mass="9831">MDLEGKCCLIHAIGGIIFGYLANYVYTAGLGIFSGIATLIFLFIGAVIFGHISAKTFGEESLTQKQWLGCGVLPFFLVAIVVWVLKFNGLI</sequence>